<accession>Q65SC6</accession>
<name>NAGK_MANSM</name>
<comment type="function">
    <text evidence="1">Catalyzes the phosphorylation of N-acetyl-D-glucosamine (GlcNAc) derived from cell-wall degradation, yielding GlcNAc-6-P.</text>
</comment>
<comment type="catalytic activity">
    <reaction evidence="1">
        <text>N-acetyl-D-glucosamine + ATP = N-acetyl-D-glucosamine 6-phosphate + ADP + H(+)</text>
        <dbReference type="Rhea" id="RHEA:17417"/>
        <dbReference type="ChEBI" id="CHEBI:15378"/>
        <dbReference type="ChEBI" id="CHEBI:30616"/>
        <dbReference type="ChEBI" id="CHEBI:57513"/>
        <dbReference type="ChEBI" id="CHEBI:456216"/>
        <dbReference type="ChEBI" id="CHEBI:506227"/>
        <dbReference type="EC" id="2.7.1.59"/>
    </reaction>
</comment>
<comment type="pathway">
    <text evidence="1">Cell wall biogenesis; peptidoglycan recycling.</text>
</comment>
<comment type="similarity">
    <text evidence="1">Belongs to the ROK (NagC/XylR) family. NagK subfamily.</text>
</comment>
<comment type="sequence caution" evidence="2">
    <conflict type="erroneous initiation">
        <sequence resource="EMBL-CDS" id="AAU38134"/>
    </conflict>
</comment>
<evidence type="ECO:0000255" key="1">
    <source>
        <dbReference type="HAMAP-Rule" id="MF_01271"/>
    </source>
</evidence>
<evidence type="ECO:0000305" key="2"/>
<dbReference type="EC" id="2.7.1.59" evidence="1"/>
<dbReference type="EMBL" id="AE016827">
    <property type="protein sequence ID" value="AAU38134.1"/>
    <property type="status" value="ALT_INIT"/>
    <property type="molecule type" value="Genomic_DNA"/>
</dbReference>
<dbReference type="RefSeq" id="WP_011200700.1">
    <property type="nucleotide sequence ID" value="NC_006300.1"/>
</dbReference>
<dbReference type="SMR" id="Q65SC6"/>
<dbReference type="STRING" id="221988.MS1527"/>
<dbReference type="KEGG" id="msu:MS1527"/>
<dbReference type="eggNOG" id="COG1940">
    <property type="taxonomic scope" value="Bacteria"/>
</dbReference>
<dbReference type="HOGENOM" id="CLU_036604_0_3_6"/>
<dbReference type="OrthoDB" id="9810372at2"/>
<dbReference type="UniPathway" id="UPA00544"/>
<dbReference type="Proteomes" id="UP000000607">
    <property type="component" value="Chromosome"/>
</dbReference>
<dbReference type="GO" id="GO:0005524">
    <property type="term" value="F:ATP binding"/>
    <property type="evidence" value="ECO:0007669"/>
    <property type="project" value="UniProtKB-UniRule"/>
</dbReference>
<dbReference type="GO" id="GO:0045127">
    <property type="term" value="F:N-acetylglucosamine kinase activity"/>
    <property type="evidence" value="ECO:0007669"/>
    <property type="project" value="UniProtKB-UniRule"/>
</dbReference>
<dbReference type="GO" id="GO:0008270">
    <property type="term" value="F:zinc ion binding"/>
    <property type="evidence" value="ECO:0007669"/>
    <property type="project" value="UniProtKB-UniRule"/>
</dbReference>
<dbReference type="GO" id="GO:0006044">
    <property type="term" value="P:N-acetylglucosamine metabolic process"/>
    <property type="evidence" value="ECO:0007669"/>
    <property type="project" value="UniProtKB-UniRule"/>
</dbReference>
<dbReference type="GO" id="GO:0009254">
    <property type="term" value="P:peptidoglycan turnover"/>
    <property type="evidence" value="ECO:0007669"/>
    <property type="project" value="UniProtKB-UniRule"/>
</dbReference>
<dbReference type="CDD" id="cd24057">
    <property type="entry name" value="ASKHA_NBD_ROK_NAGK"/>
    <property type="match status" value="1"/>
</dbReference>
<dbReference type="FunFam" id="3.30.420.40:FF:000049">
    <property type="entry name" value="N-acetyl-D-glucosamine kinase"/>
    <property type="match status" value="1"/>
</dbReference>
<dbReference type="Gene3D" id="3.30.420.40">
    <property type="match status" value="2"/>
</dbReference>
<dbReference type="HAMAP" id="MF_01271">
    <property type="entry name" value="GlcNAc_kinase"/>
    <property type="match status" value="1"/>
</dbReference>
<dbReference type="InterPro" id="IPR043129">
    <property type="entry name" value="ATPase_NBD"/>
</dbReference>
<dbReference type="InterPro" id="IPR023505">
    <property type="entry name" value="N-acetyl-D-glucosamine_kinase"/>
</dbReference>
<dbReference type="InterPro" id="IPR000600">
    <property type="entry name" value="ROK"/>
</dbReference>
<dbReference type="InterPro" id="IPR049874">
    <property type="entry name" value="ROK_cs"/>
</dbReference>
<dbReference type="NCBIfam" id="NF009835">
    <property type="entry name" value="PRK13310.1"/>
    <property type="match status" value="1"/>
</dbReference>
<dbReference type="PANTHER" id="PTHR18964:SF162">
    <property type="entry name" value="N-ACETYL-D-GLUCOSAMINE KINASE"/>
    <property type="match status" value="1"/>
</dbReference>
<dbReference type="PANTHER" id="PTHR18964">
    <property type="entry name" value="ROK (REPRESSOR, ORF, KINASE) FAMILY"/>
    <property type="match status" value="1"/>
</dbReference>
<dbReference type="Pfam" id="PF00480">
    <property type="entry name" value="ROK"/>
    <property type="match status" value="1"/>
</dbReference>
<dbReference type="SUPFAM" id="SSF53067">
    <property type="entry name" value="Actin-like ATPase domain"/>
    <property type="match status" value="1"/>
</dbReference>
<dbReference type="PROSITE" id="PS01125">
    <property type="entry name" value="ROK"/>
    <property type="match status" value="1"/>
</dbReference>
<keyword id="KW-0067">ATP-binding</keyword>
<keyword id="KW-0119">Carbohydrate metabolism</keyword>
<keyword id="KW-0418">Kinase</keyword>
<keyword id="KW-0479">Metal-binding</keyword>
<keyword id="KW-0547">Nucleotide-binding</keyword>
<keyword id="KW-0808">Transferase</keyword>
<keyword id="KW-0862">Zinc</keyword>
<sequence>MLYGFDIGGTKIELAVFNDKLERQYTERVETPKDSYEQWLDVIVNLVEKADQKFACKGSVGLGLPGFVNHETGIAEITNIRVADNKPIIKDLSERLGREVRAENDANCFALSEAWDEENQQYPFVLGLILGTGFGGGLIFNGKVHSGQIGMAGELGHLQLNYHALKLLGWDKAPIYDCGCGNRACLDTYLSGRGFEMLYRDLKGEALSAKEIIERFYAADKTAVDFVGLFIELCAISLGNIITALDPHVIVLGGGLSNFDYLYEALPKALPKHLMRSAKVPVIKKAKYGDSGGVRGAAALFLTK</sequence>
<gene>
    <name evidence="1" type="primary">nagK</name>
    <name type="ordered locus">MS1527</name>
</gene>
<organism>
    <name type="scientific">Mannheimia succiniciproducens (strain KCTC 0769BP / MBEL55E)</name>
    <dbReference type="NCBI Taxonomy" id="221988"/>
    <lineage>
        <taxon>Bacteria</taxon>
        <taxon>Pseudomonadati</taxon>
        <taxon>Pseudomonadota</taxon>
        <taxon>Gammaproteobacteria</taxon>
        <taxon>Pasteurellales</taxon>
        <taxon>Pasteurellaceae</taxon>
        <taxon>Basfia</taxon>
    </lineage>
</organism>
<feature type="chain" id="PRO_0000270108" description="N-acetyl-D-glucosamine kinase">
    <location>
        <begin position="1"/>
        <end position="304"/>
    </location>
</feature>
<feature type="binding site" evidence="1">
    <location>
        <begin position="4"/>
        <end position="11"/>
    </location>
    <ligand>
        <name>ATP</name>
        <dbReference type="ChEBI" id="CHEBI:30616"/>
    </ligand>
</feature>
<feature type="binding site" evidence="1">
    <location>
        <begin position="133"/>
        <end position="140"/>
    </location>
    <ligand>
        <name>ATP</name>
        <dbReference type="ChEBI" id="CHEBI:30616"/>
    </ligand>
</feature>
<feature type="binding site" evidence="1">
    <location>
        <position position="157"/>
    </location>
    <ligand>
        <name>Zn(2+)</name>
        <dbReference type="ChEBI" id="CHEBI:29105"/>
    </ligand>
</feature>
<feature type="binding site" evidence="1">
    <location>
        <position position="178"/>
    </location>
    <ligand>
        <name>Zn(2+)</name>
        <dbReference type="ChEBI" id="CHEBI:29105"/>
    </ligand>
</feature>
<feature type="binding site" evidence="1">
    <location>
        <position position="180"/>
    </location>
    <ligand>
        <name>Zn(2+)</name>
        <dbReference type="ChEBI" id="CHEBI:29105"/>
    </ligand>
</feature>
<feature type="binding site" evidence="1">
    <location>
        <position position="185"/>
    </location>
    <ligand>
        <name>Zn(2+)</name>
        <dbReference type="ChEBI" id="CHEBI:29105"/>
    </ligand>
</feature>
<proteinExistence type="inferred from homology"/>
<protein>
    <recommendedName>
        <fullName evidence="1">N-acetyl-D-glucosamine kinase</fullName>
        <ecNumber evidence="1">2.7.1.59</ecNumber>
    </recommendedName>
    <alternativeName>
        <fullName evidence="1">GlcNAc kinase</fullName>
    </alternativeName>
</protein>
<reference key="1">
    <citation type="journal article" date="2004" name="Nat. Biotechnol.">
        <title>The genome sequence of the capnophilic rumen bacterium Mannheimia succiniciproducens.</title>
        <authorList>
            <person name="Hong S.H."/>
            <person name="Kim J.S."/>
            <person name="Lee S.Y."/>
            <person name="In Y.H."/>
            <person name="Choi S.S."/>
            <person name="Rih J.-K."/>
            <person name="Kim C.H."/>
            <person name="Jeong H."/>
            <person name="Hur C.G."/>
            <person name="Kim J.J."/>
        </authorList>
    </citation>
    <scope>NUCLEOTIDE SEQUENCE [LARGE SCALE GENOMIC DNA]</scope>
    <source>
        <strain>KCTC 0769BP / MBEL55E</strain>
    </source>
</reference>